<protein>
    <recommendedName>
        <fullName evidence="1">DNA ligase 2</fullName>
        <ecNumber evidence="1">6.5.1.1</ecNumber>
    </recommendedName>
    <alternativeName>
        <fullName evidence="1">Polydeoxyribonucleotide synthase [ATP] 2</fullName>
    </alternativeName>
</protein>
<accession>A1RY72</accession>
<feature type="chain" id="PRO_0000365266" description="DNA ligase 2">
    <location>
        <begin position="1"/>
        <end position="601"/>
    </location>
</feature>
<feature type="active site" description="N6-AMP-lysine intermediate" evidence="1">
    <location>
        <position position="265"/>
    </location>
</feature>
<feature type="binding site" evidence="1">
    <location>
        <position position="263"/>
    </location>
    <ligand>
        <name>ATP</name>
        <dbReference type="ChEBI" id="CHEBI:30616"/>
    </ligand>
</feature>
<feature type="binding site" evidence="1">
    <location>
        <position position="270"/>
    </location>
    <ligand>
        <name>ATP</name>
        <dbReference type="ChEBI" id="CHEBI:30616"/>
    </ligand>
</feature>
<feature type="binding site" evidence="1">
    <location>
        <position position="285"/>
    </location>
    <ligand>
        <name>ATP</name>
        <dbReference type="ChEBI" id="CHEBI:30616"/>
    </ligand>
</feature>
<feature type="binding site" evidence="1">
    <location>
        <position position="314"/>
    </location>
    <ligand>
        <name>ATP</name>
        <dbReference type="ChEBI" id="CHEBI:30616"/>
    </ligand>
</feature>
<feature type="binding site" evidence="1">
    <location>
        <position position="354"/>
    </location>
    <ligand>
        <name>ATP</name>
        <dbReference type="ChEBI" id="CHEBI:30616"/>
    </ligand>
</feature>
<feature type="binding site" evidence="1">
    <location>
        <position position="432"/>
    </location>
    <ligand>
        <name>ATP</name>
        <dbReference type="ChEBI" id="CHEBI:30616"/>
    </ligand>
</feature>
<feature type="binding site" evidence="1">
    <location>
        <position position="438"/>
    </location>
    <ligand>
        <name>ATP</name>
        <dbReference type="ChEBI" id="CHEBI:30616"/>
    </ligand>
</feature>
<sequence length="601" mass="66943">MGAAGDLPYSVLADFYERIESTSSRLAMTDYLVALFKKTPPEVIDKVVYLTQGQLRPDYEGVELGVAEKLALRALAKASGRHLKDVEDLYKKTGDIGAVAEKLLTAPGGGLLEFFGTPVQKKELTVSQVYSALMKIAQASGEGAQETKVNTLVALLQDAKPKEARYILRTVLGRLRLGIADMTILDALAAAFAGSKAARDVIERAYTKHPDLGYIAKLLATKGLDAVASLKIEVGIPVLPMLAERLSDPAEILEKLGGKCLAEYKYDGERVQAHKSGDKVLLFSRRLENITHHYPDVVEYVKRLKVREAIVEGEIVAYNPDTGEMLPFQELMHRRRKYDVEKAMKEYPVRVYLFDVIYMDGEELIEKPLDQRRLILEKIVPEGDEDILLSTAKVVGDAKDLLHFFEQAISEGCEGVMCKSIGPGSIYQMGARGWLWIKFKRDYRMEMTDTVDLVVVGGFHGRGKRAGTYGALLMAAYDPETDTFKTVCKVGTGFTDEDLAKLPELLDPYKIPHRHPRVFSKIEADVWFVPAVVLEIIGAEITLSPLHTCALNKLEEGAGLAIRFPRFTGRYRFDKKPEQATTESELIEMYKSQKKTALQQS</sequence>
<proteinExistence type="inferred from homology"/>
<reference key="1">
    <citation type="journal article" date="2008" name="J. Bacteriol.">
        <title>Genome sequence of Thermofilum pendens reveals an exceptional loss of biosynthetic pathways without genome reduction.</title>
        <authorList>
            <person name="Anderson I."/>
            <person name="Rodriguez J."/>
            <person name="Susanti D."/>
            <person name="Porat I."/>
            <person name="Reich C."/>
            <person name="Ulrich L.E."/>
            <person name="Elkins J.G."/>
            <person name="Mavromatis K."/>
            <person name="Lykidis A."/>
            <person name="Kim E."/>
            <person name="Thompson L.S."/>
            <person name="Nolan M."/>
            <person name="Land M."/>
            <person name="Copeland A."/>
            <person name="Lapidus A."/>
            <person name="Lucas S."/>
            <person name="Detter C."/>
            <person name="Zhulin I.B."/>
            <person name="Olsen G.J."/>
            <person name="Whitman W."/>
            <person name="Mukhopadhyay B."/>
            <person name="Bristow J."/>
            <person name="Kyrpides N."/>
        </authorList>
    </citation>
    <scope>NUCLEOTIDE SEQUENCE [LARGE SCALE GENOMIC DNA]</scope>
    <source>
        <strain>DSM 2475 / Hrk 5</strain>
    </source>
</reference>
<evidence type="ECO:0000255" key="1">
    <source>
        <dbReference type="HAMAP-Rule" id="MF_00407"/>
    </source>
</evidence>
<gene>
    <name evidence="1" type="primary">lig2</name>
    <name type="ordered locus">Tpen_0750</name>
</gene>
<dbReference type="EC" id="6.5.1.1" evidence="1"/>
<dbReference type="EMBL" id="CP000505">
    <property type="protein sequence ID" value="ABL78152.1"/>
    <property type="molecule type" value="Genomic_DNA"/>
</dbReference>
<dbReference type="RefSeq" id="WP_011752417.1">
    <property type="nucleotide sequence ID" value="NC_008698.1"/>
</dbReference>
<dbReference type="SMR" id="A1RY72"/>
<dbReference type="STRING" id="368408.Tpen_0750"/>
<dbReference type="EnsemblBacteria" id="ABL78152">
    <property type="protein sequence ID" value="ABL78152"/>
    <property type="gene ID" value="Tpen_0750"/>
</dbReference>
<dbReference type="GeneID" id="4600401"/>
<dbReference type="KEGG" id="tpe:Tpen_0750"/>
<dbReference type="eggNOG" id="arCOG01347">
    <property type="taxonomic scope" value="Archaea"/>
</dbReference>
<dbReference type="HOGENOM" id="CLU_005138_6_0_2"/>
<dbReference type="OrthoDB" id="31274at2157"/>
<dbReference type="Proteomes" id="UP000000641">
    <property type="component" value="Chromosome"/>
</dbReference>
<dbReference type="GO" id="GO:0005524">
    <property type="term" value="F:ATP binding"/>
    <property type="evidence" value="ECO:0007669"/>
    <property type="project" value="UniProtKB-UniRule"/>
</dbReference>
<dbReference type="GO" id="GO:0003677">
    <property type="term" value="F:DNA binding"/>
    <property type="evidence" value="ECO:0007669"/>
    <property type="project" value="InterPro"/>
</dbReference>
<dbReference type="GO" id="GO:0003910">
    <property type="term" value="F:DNA ligase (ATP) activity"/>
    <property type="evidence" value="ECO:0007669"/>
    <property type="project" value="UniProtKB-UniRule"/>
</dbReference>
<dbReference type="GO" id="GO:0046872">
    <property type="term" value="F:metal ion binding"/>
    <property type="evidence" value="ECO:0007669"/>
    <property type="project" value="UniProtKB-KW"/>
</dbReference>
<dbReference type="GO" id="GO:0051301">
    <property type="term" value="P:cell division"/>
    <property type="evidence" value="ECO:0007669"/>
    <property type="project" value="UniProtKB-KW"/>
</dbReference>
<dbReference type="GO" id="GO:0071897">
    <property type="term" value="P:DNA biosynthetic process"/>
    <property type="evidence" value="ECO:0007669"/>
    <property type="project" value="InterPro"/>
</dbReference>
<dbReference type="GO" id="GO:0006310">
    <property type="term" value="P:DNA recombination"/>
    <property type="evidence" value="ECO:0007669"/>
    <property type="project" value="UniProtKB-UniRule"/>
</dbReference>
<dbReference type="GO" id="GO:0006281">
    <property type="term" value="P:DNA repair"/>
    <property type="evidence" value="ECO:0007669"/>
    <property type="project" value="UniProtKB-UniRule"/>
</dbReference>
<dbReference type="GO" id="GO:0006273">
    <property type="term" value="P:lagging strand elongation"/>
    <property type="evidence" value="ECO:0007669"/>
    <property type="project" value="TreeGrafter"/>
</dbReference>
<dbReference type="CDD" id="cd07901">
    <property type="entry name" value="Adenylation_DNA_ligase_Arch_LigB"/>
    <property type="match status" value="1"/>
</dbReference>
<dbReference type="CDD" id="cd07969">
    <property type="entry name" value="OBF_DNA_ligase_I"/>
    <property type="match status" value="1"/>
</dbReference>
<dbReference type="FunFam" id="1.10.3260.10:FF:000007">
    <property type="entry name" value="DNA ligase"/>
    <property type="match status" value="1"/>
</dbReference>
<dbReference type="FunFam" id="2.40.50.140:FF:000062">
    <property type="entry name" value="DNA ligase"/>
    <property type="match status" value="1"/>
</dbReference>
<dbReference type="FunFam" id="3.30.470.30:FF:000012">
    <property type="entry name" value="Probable DNA ligase"/>
    <property type="match status" value="1"/>
</dbReference>
<dbReference type="Gene3D" id="1.10.3260.10">
    <property type="entry name" value="DNA ligase, ATP-dependent, N-terminal domain"/>
    <property type="match status" value="1"/>
</dbReference>
<dbReference type="Gene3D" id="3.30.470.30">
    <property type="entry name" value="DNA ligase/mRNA capping enzyme"/>
    <property type="match status" value="1"/>
</dbReference>
<dbReference type="Gene3D" id="2.40.50.140">
    <property type="entry name" value="Nucleic acid-binding proteins"/>
    <property type="match status" value="1"/>
</dbReference>
<dbReference type="HAMAP" id="MF_00407">
    <property type="entry name" value="DNA_ligase"/>
    <property type="match status" value="1"/>
</dbReference>
<dbReference type="InterPro" id="IPR050191">
    <property type="entry name" value="ATP-dep_DNA_ligase"/>
</dbReference>
<dbReference type="InterPro" id="IPR022865">
    <property type="entry name" value="DNA_ligae_ATP-dep_bac/arc"/>
</dbReference>
<dbReference type="InterPro" id="IPR000977">
    <property type="entry name" value="DNA_ligase_ATP-dep"/>
</dbReference>
<dbReference type="InterPro" id="IPR012309">
    <property type="entry name" value="DNA_ligase_ATP-dep_C"/>
</dbReference>
<dbReference type="InterPro" id="IPR012310">
    <property type="entry name" value="DNA_ligase_ATP-dep_cent"/>
</dbReference>
<dbReference type="InterPro" id="IPR016059">
    <property type="entry name" value="DNA_ligase_ATP-dep_CS"/>
</dbReference>
<dbReference type="InterPro" id="IPR012308">
    <property type="entry name" value="DNA_ligase_ATP-dep_N"/>
</dbReference>
<dbReference type="InterPro" id="IPR036599">
    <property type="entry name" value="DNA_ligase_N_sf"/>
</dbReference>
<dbReference type="InterPro" id="IPR012340">
    <property type="entry name" value="NA-bd_OB-fold"/>
</dbReference>
<dbReference type="NCBIfam" id="TIGR00574">
    <property type="entry name" value="dnl1"/>
    <property type="match status" value="1"/>
</dbReference>
<dbReference type="PANTHER" id="PTHR45674:SF4">
    <property type="entry name" value="DNA LIGASE 1"/>
    <property type="match status" value="1"/>
</dbReference>
<dbReference type="PANTHER" id="PTHR45674">
    <property type="entry name" value="DNA LIGASE 1/3 FAMILY MEMBER"/>
    <property type="match status" value="1"/>
</dbReference>
<dbReference type="Pfam" id="PF04679">
    <property type="entry name" value="DNA_ligase_A_C"/>
    <property type="match status" value="1"/>
</dbReference>
<dbReference type="Pfam" id="PF01068">
    <property type="entry name" value="DNA_ligase_A_M"/>
    <property type="match status" value="1"/>
</dbReference>
<dbReference type="Pfam" id="PF04675">
    <property type="entry name" value="DNA_ligase_A_N"/>
    <property type="match status" value="1"/>
</dbReference>
<dbReference type="SUPFAM" id="SSF117018">
    <property type="entry name" value="ATP-dependent DNA ligase DNA-binding domain"/>
    <property type="match status" value="1"/>
</dbReference>
<dbReference type="SUPFAM" id="SSF56091">
    <property type="entry name" value="DNA ligase/mRNA capping enzyme, catalytic domain"/>
    <property type="match status" value="1"/>
</dbReference>
<dbReference type="SUPFAM" id="SSF50249">
    <property type="entry name" value="Nucleic acid-binding proteins"/>
    <property type="match status" value="1"/>
</dbReference>
<dbReference type="PROSITE" id="PS00697">
    <property type="entry name" value="DNA_LIGASE_A1"/>
    <property type="match status" value="1"/>
</dbReference>
<dbReference type="PROSITE" id="PS50160">
    <property type="entry name" value="DNA_LIGASE_A3"/>
    <property type="match status" value="1"/>
</dbReference>
<organism>
    <name type="scientific">Thermofilum pendens (strain DSM 2475 / Hrk 5)</name>
    <dbReference type="NCBI Taxonomy" id="368408"/>
    <lineage>
        <taxon>Archaea</taxon>
        <taxon>Thermoproteota</taxon>
        <taxon>Thermoprotei</taxon>
        <taxon>Thermofilales</taxon>
        <taxon>Thermofilaceae</taxon>
        <taxon>Thermofilum</taxon>
    </lineage>
</organism>
<name>DNLI2_THEPD</name>
<comment type="function">
    <text evidence="1">DNA ligase that seals nicks in double-stranded DNA during DNA replication, DNA recombination and DNA repair.</text>
</comment>
<comment type="catalytic activity">
    <reaction evidence="1">
        <text>ATP + (deoxyribonucleotide)n-3'-hydroxyl + 5'-phospho-(deoxyribonucleotide)m = (deoxyribonucleotide)n+m + AMP + diphosphate.</text>
        <dbReference type="EC" id="6.5.1.1"/>
    </reaction>
</comment>
<comment type="cofactor">
    <cofactor evidence="1">
        <name>Mg(2+)</name>
        <dbReference type="ChEBI" id="CHEBI:18420"/>
    </cofactor>
</comment>
<comment type="similarity">
    <text evidence="1">Belongs to the ATP-dependent DNA ligase family.</text>
</comment>
<keyword id="KW-0067">ATP-binding</keyword>
<keyword id="KW-0131">Cell cycle</keyword>
<keyword id="KW-0132">Cell division</keyword>
<keyword id="KW-0227">DNA damage</keyword>
<keyword id="KW-0233">DNA recombination</keyword>
<keyword id="KW-0234">DNA repair</keyword>
<keyword id="KW-0235">DNA replication</keyword>
<keyword id="KW-0436">Ligase</keyword>
<keyword id="KW-0460">Magnesium</keyword>
<keyword id="KW-0479">Metal-binding</keyword>
<keyword id="KW-0547">Nucleotide-binding</keyword>
<keyword id="KW-1185">Reference proteome</keyword>